<keyword id="KW-0963">Cytoplasm</keyword>
<keyword id="KW-0378">Hydrolase</keyword>
<keyword id="KW-0395">Inflammatory response</keyword>
<keyword id="KW-1267">Proteomics identification</keyword>
<keyword id="KW-1185">Reference proteome</keyword>
<accession>Q96I13</accession>
<accession>Q9HAE9</accession>
<protein>
    <recommendedName>
        <fullName evidence="5">Protein ABHD8</fullName>
        <ecNumber>3.-.-.-</ecNumber>
    </recommendedName>
    <alternativeName>
        <fullName evidence="5">Alpha/beta hydrolase domain-containing protein 8</fullName>
        <shortName evidence="6">Abhydrolase domain-containing protein 8</shortName>
    </alternativeName>
</protein>
<gene>
    <name evidence="6" type="primary">ABHD8</name>
</gene>
<evidence type="ECO:0000250" key="1"/>
<evidence type="ECO:0000255" key="2"/>
<evidence type="ECO:0000256" key="3">
    <source>
        <dbReference type="SAM" id="MobiDB-lite"/>
    </source>
</evidence>
<evidence type="ECO:0000269" key="4">
    <source>
    </source>
</evidence>
<evidence type="ECO:0000305" key="5"/>
<evidence type="ECO:0000312" key="6">
    <source>
        <dbReference type="HGNC" id="HGNC:23759"/>
    </source>
</evidence>
<comment type="function">
    <text evidence="4">Negatively regulates NLRP3-driven inflammation (PubMed:39225180). Promotes NLRP3 degradation through the chaperone-mediated autophagy (CMA) pathway, hence attenuating inflammasome activation and IL1B secretion. Acts by recruiting palmitoyltransferase ZDHHC12 to NLRP3, facilitating NLRP3 palmitoylation and subsequent degradation (PubMed:39225180).</text>
</comment>
<comment type="subunit">
    <text evidence="4">Interacts with NLRP3 (via NACHT and LLR domains); this interaction is enhanced in the presence of NLRP3 inflammasome inducers, such as ATP, nigericin, silica, or alum (PubMed:39225180). Interacts with ZDHHC12 (PubMed:39225180).</text>
</comment>
<comment type="subunit">
    <text evidence="4">(Microbial infection) Interacts with SARS-CoV-2 nucleoprotein N; this interaction disrupts the NLRP3-ABHD8 association, enhancing NLRP3 stability, ultimately leading to increased inflammasome activation.</text>
</comment>
<comment type="interaction">
    <interactant intactId="EBI-17180442">
        <id>Q96I13</id>
    </interactant>
    <interactant intactId="EBI-10242151">
        <id>Q53EP0-3</id>
        <label>FNDC3B</label>
    </interactant>
    <organismsDiffer>false</organismsDiffer>
    <experiments>3</experiments>
</comment>
<comment type="interaction">
    <interactant intactId="EBI-17180442">
        <id>Q96I13</id>
    </interactant>
    <interactant intactId="EBI-11741890">
        <id>Q86VK4-3</id>
        <label>ZNF410</label>
    </interactant>
    <organismsDiffer>false</organismsDiffer>
    <experiments>3</experiments>
</comment>
<comment type="subcellular location">
    <subcellularLocation>
        <location evidence="4">Cytoplasm</location>
    </subcellularLocation>
</comment>
<comment type="similarity">
    <text evidence="5">Belongs to the AB hydrolase superfamily.</text>
</comment>
<feature type="chain" id="PRO_0000281382" description="Protein ABHD8">
    <location>
        <begin position="1"/>
        <end position="439"/>
    </location>
</feature>
<feature type="domain" description="AB hydrolase-1" evidence="2">
    <location>
        <begin position="177"/>
        <end position="279"/>
    </location>
</feature>
<feature type="region of interest" description="Disordered" evidence="3">
    <location>
        <begin position="49"/>
        <end position="70"/>
    </location>
</feature>
<feature type="region of interest" description="Disordered" evidence="3">
    <location>
        <begin position="124"/>
        <end position="156"/>
    </location>
</feature>
<feature type="compositionally biased region" description="Gly residues" evidence="3">
    <location>
        <begin position="136"/>
        <end position="145"/>
    </location>
</feature>
<feature type="compositionally biased region" description="Basic residues" evidence="3">
    <location>
        <begin position="146"/>
        <end position="156"/>
    </location>
</feature>
<feature type="active site" description="Charge relay system" evidence="1">
    <location>
        <position position="252"/>
    </location>
</feature>
<feature type="active site" description="Charge relay system" evidence="1">
    <location>
        <position position="370"/>
    </location>
</feature>
<feature type="active site" description="Charge relay system" evidence="1">
    <location>
        <position position="398"/>
    </location>
</feature>
<feature type="sequence conflict" description="In Ref. 1; BAB13900." evidence="5" ref="1">
    <original>L</original>
    <variation>P</variation>
    <location>
        <position position="103"/>
    </location>
</feature>
<name>ABHD8_HUMAN</name>
<dbReference type="EC" id="3.-.-.-"/>
<dbReference type="EMBL" id="AK021805">
    <property type="protein sequence ID" value="BAB13900.1"/>
    <property type="molecule type" value="mRNA"/>
</dbReference>
<dbReference type="EMBL" id="BC007895">
    <property type="protein sequence ID" value="AAH07895.1"/>
    <property type="molecule type" value="mRNA"/>
</dbReference>
<dbReference type="EMBL" id="BC020173">
    <property type="protein sequence ID" value="AAH20173.1"/>
    <property type="molecule type" value="mRNA"/>
</dbReference>
<dbReference type="EMBL" id="BC039087">
    <property type="protein sequence ID" value="AAH39087.1"/>
    <property type="molecule type" value="mRNA"/>
</dbReference>
<dbReference type="CCDS" id="CCDS12355.1"/>
<dbReference type="RefSeq" id="NP_078803.4">
    <property type="nucleotide sequence ID" value="NM_024527.4"/>
</dbReference>
<dbReference type="SMR" id="Q96I13"/>
<dbReference type="BioGRID" id="122722">
    <property type="interactions" value="14"/>
</dbReference>
<dbReference type="FunCoup" id="Q96I13">
    <property type="interactions" value="107"/>
</dbReference>
<dbReference type="IntAct" id="Q96I13">
    <property type="interactions" value="6"/>
</dbReference>
<dbReference type="STRING" id="9606.ENSP00000247706"/>
<dbReference type="ESTHER" id="human-ABHD8">
    <property type="family name" value="ABHD8"/>
</dbReference>
<dbReference type="MEROPS" id="S33.011"/>
<dbReference type="GlyGen" id="Q96I13">
    <property type="glycosylation" value="1 site"/>
</dbReference>
<dbReference type="iPTMnet" id="Q96I13"/>
<dbReference type="PhosphoSitePlus" id="Q96I13"/>
<dbReference type="BioMuta" id="ABHD8"/>
<dbReference type="DMDM" id="74732007"/>
<dbReference type="MassIVE" id="Q96I13"/>
<dbReference type="PaxDb" id="9606-ENSP00000247706"/>
<dbReference type="PeptideAtlas" id="Q96I13"/>
<dbReference type="ProteomicsDB" id="76801"/>
<dbReference type="Antibodypedia" id="51446">
    <property type="antibodies" value="130 antibodies from 26 providers"/>
</dbReference>
<dbReference type="DNASU" id="79575"/>
<dbReference type="Ensembl" id="ENST00000247706.4">
    <property type="protein sequence ID" value="ENSP00000247706.2"/>
    <property type="gene ID" value="ENSG00000127220.6"/>
</dbReference>
<dbReference type="GeneID" id="79575"/>
<dbReference type="KEGG" id="hsa:79575"/>
<dbReference type="MANE-Select" id="ENST00000247706.4">
    <property type="protein sequence ID" value="ENSP00000247706.2"/>
    <property type="RefSeq nucleotide sequence ID" value="NM_024527.5"/>
    <property type="RefSeq protein sequence ID" value="NP_078803.4"/>
</dbReference>
<dbReference type="UCSC" id="uc002ngb.4">
    <property type="organism name" value="human"/>
</dbReference>
<dbReference type="AGR" id="HGNC:23759"/>
<dbReference type="CTD" id="79575"/>
<dbReference type="DisGeNET" id="79575"/>
<dbReference type="GeneCards" id="ABHD8"/>
<dbReference type="HGNC" id="HGNC:23759">
    <property type="gene designation" value="ABHD8"/>
</dbReference>
<dbReference type="HPA" id="ENSG00000127220">
    <property type="expression patterns" value="Tissue enhanced (brain)"/>
</dbReference>
<dbReference type="MIM" id="621036">
    <property type="type" value="gene"/>
</dbReference>
<dbReference type="neXtProt" id="NX_Q96I13"/>
<dbReference type="OpenTargets" id="ENSG00000127220"/>
<dbReference type="PharmGKB" id="PA134994313"/>
<dbReference type="VEuPathDB" id="HostDB:ENSG00000127220"/>
<dbReference type="eggNOG" id="KOG2382">
    <property type="taxonomic scope" value="Eukaryota"/>
</dbReference>
<dbReference type="GeneTree" id="ENSGT00390000007336"/>
<dbReference type="HOGENOM" id="CLU_057347_0_0_1"/>
<dbReference type="InParanoid" id="Q96I13"/>
<dbReference type="OMA" id="VHCQRRI"/>
<dbReference type="OrthoDB" id="428974at2759"/>
<dbReference type="PAN-GO" id="Q96I13">
    <property type="GO annotations" value="5 GO annotations based on evolutionary models"/>
</dbReference>
<dbReference type="PhylomeDB" id="Q96I13"/>
<dbReference type="TreeFam" id="TF331708"/>
<dbReference type="PathwayCommons" id="Q96I13"/>
<dbReference type="SignaLink" id="Q96I13"/>
<dbReference type="BioGRID-ORCS" id="79575">
    <property type="hits" value="20 hits in 1161 CRISPR screens"/>
</dbReference>
<dbReference type="ChiTaRS" id="ABHD8">
    <property type="organism name" value="human"/>
</dbReference>
<dbReference type="GenomeRNAi" id="79575"/>
<dbReference type="Pharos" id="Q96I13">
    <property type="development level" value="Tdark"/>
</dbReference>
<dbReference type="PRO" id="PR:Q96I13"/>
<dbReference type="Proteomes" id="UP000005640">
    <property type="component" value="Chromosome 19"/>
</dbReference>
<dbReference type="RNAct" id="Q96I13">
    <property type="molecule type" value="protein"/>
</dbReference>
<dbReference type="Bgee" id="ENSG00000127220">
    <property type="expression patterns" value="Expressed in male germ line stem cell (sensu Vertebrata) in testis and 105 other cell types or tissues"/>
</dbReference>
<dbReference type="ExpressionAtlas" id="Q96I13">
    <property type="expression patterns" value="baseline and differential"/>
</dbReference>
<dbReference type="GO" id="GO:0005737">
    <property type="term" value="C:cytoplasm"/>
    <property type="evidence" value="ECO:0000314"/>
    <property type="project" value="UniProtKB"/>
</dbReference>
<dbReference type="GO" id="GO:0070062">
    <property type="term" value="C:extracellular exosome"/>
    <property type="evidence" value="ECO:0007005"/>
    <property type="project" value="UniProtKB"/>
</dbReference>
<dbReference type="GO" id="GO:0005739">
    <property type="term" value="C:mitochondrion"/>
    <property type="evidence" value="ECO:0000318"/>
    <property type="project" value="GO_Central"/>
</dbReference>
<dbReference type="GO" id="GO:0052689">
    <property type="term" value="F:carboxylic ester hydrolase activity"/>
    <property type="evidence" value="ECO:0000318"/>
    <property type="project" value="GO_Central"/>
</dbReference>
<dbReference type="GO" id="GO:0042171">
    <property type="term" value="F:lysophosphatidic acid acyltransferase activity"/>
    <property type="evidence" value="ECO:0000318"/>
    <property type="project" value="GO_Central"/>
</dbReference>
<dbReference type="GO" id="GO:0055088">
    <property type="term" value="P:lipid homeostasis"/>
    <property type="evidence" value="ECO:0000318"/>
    <property type="project" value="GO_Central"/>
</dbReference>
<dbReference type="GO" id="GO:1900226">
    <property type="term" value="P:negative regulation of NLRP3 inflammasome complex assembly"/>
    <property type="evidence" value="ECO:0000315"/>
    <property type="project" value="UniProtKB"/>
</dbReference>
<dbReference type="GO" id="GO:0006654">
    <property type="term" value="P:phosphatidic acid biosynthetic process"/>
    <property type="evidence" value="ECO:0000318"/>
    <property type="project" value="GO_Central"/>
</dbReference>
<dbReference type="FunFam" id="3.40.50.1820:FF:000017">
    <property type="entry name" value="Abhydrolase domain containing 8"/>
    <property type="match status" value="1"/>
</dbReference>
<dbReference type="Gene3D" id="3.40.50.1820">
    <property type="entry name" value="alpha/beta hydrolase"/>
    <property type="match status" value="1"/>
</dbReference>
<dbReference type="InterPro" id="IPR000073">
    <property type="entry name" value="AB_hydrolase_1"/>
</dbReference>
<dbReference type="InterPro" id="IPR029058">
    <property type="entry name" value="AB_hydrolase_fold"/>
</dbReference>
<dbReference type="InterPro" id="IPR000639">
    <property type="entry name" value="Epox_hydrolase-like"/>
</dbReference>
<dbReference type="PANTHER" id="PTHR42886:SF83">
    <property type="entry name" value="PROTEIN ABHD8"/>
    <property type="match status" value="1"/>
</dbReference>
<dbReference type="PANTHER" id="PTHR42886">
    <property type="entry name" value="RE40534P-RELATED"/>
    <property type="match status" value="1"/>
</dbReference>
<dbReference type="Pfam" id="PF00561">
    <property type="entry name" value="Abhydrolase_1"/>
    <property type="match status" value="1"/>
</dbReference>
<dbReference type="PRINTS" id="PR00111">
    <property type="entry name" value="ABHYDROLASE"/>
</dbReference>
<dbReference type="PRINTS" id="PR00412">
    <property type="entry name" value="EPOXHYDRLASE"/>
</dbReference>
<dbReference type="SUPFAM" id="SSF53474">
    <property type="entry name" value="alpha/beta-Hydrolases"/>
    <property type="match status" value="1"/>
</dbReference>
<organism>
    <name type="scientific">Homo sapiens</name>
    <name type="common">Human</name>
    <dbReference type="NCBI Taxonomy" id="9606"/>
    <lineage>
        <taxon>Eukaryota</taxon>
        <taxon>Metazoa</taxon>
        <taxon>Chordata</taxon>
        <taxon>Craniata</taxon>
        <taxon>Vertebrata</taxon>
        <taxon>Euteleostomi</taxon>
        <taxon>Mammalia</taxon>
        <taxon>Eutheria</taxon>
        <taxon>Euarchontoglires</taxon>
        <taxon>Primates</taxon>
        <taxon>Haplorrhini</taxon>
        <taxon>Catarrhini</taxon>
        <taxon>Hominidae</taxon>
        <taxon>Homo</taxon>
    </lineage>
</organism>
<sequence>MLTGVTDGIFCCLLGTPPNAVGPLESVESSDGYTFVEVKPGRVLRVKHAGPAPAAAPPPPSSASSDAAQGDLSGLVRCQRRITVYRNGRLLVENLGRAPRADLLHGQNGSGEPPAALEVELADPAGSDGRLAPGSAGSGSGSGSGGRRRRARRPKRTIHIDCEKRITSCKGAQADVVLFFIHGVGGSLAIWKEQLDFFVRLGYEVVAPDLAGHGASSAPQVAAAYTFYALAEDMRAIFKRYAKKRNVLIGHSYGVSFCTFLAHEYPDLVHKVIMINGGGPTALEPSFCSIFNMPTCVLHCLSPCLAWSFLKAGFARQGAKEKQLLKEGNAFNVSSFVLRAMMSGQYWPEGDEVYHAELTVPVLLVHGMHDKFVPVEEDQRMAEILLLAFLKLIDEGSHMVMLECPETVNTLLHEFLLWEPEPSPKALPEPLPAPPEDKK</sequence>
<proteinExistence type="evidence at protein level"/>
<reference key="1">
    <citation type="journal article" date="2004" name="Nat. Genet.">
        <title>Complete sequencing and characterization of 21,243 full-length human cDNAs.</title>
        <authorList>
            <person name="Ota T."/>
            <person name="Suzuki Y."/>
            <person name="Nishikawa T."/>
            <person name="Otsuki T."/>
            <person name="Sugiyama T."/>
            <person name="Irie R."/>
            <person name="Wakamatsu A."/>
            <person name="Hayashi K."/>
            <person name="Sato H."/>
            <person name="Nagai K."/>
            <person name="Kimura K."/>
            <person name="Makita H."/>
            <person name="Sekine M."/>
            <person name="Obayashi M."/>
            <person name="Nishi T."/>
            <person name="Shibahara T."/>
            <person name="Tanaka T."/>
            <person name="Ishii S."/>
            <person name="Yamamoto J."/>
            <person name="Saito K."/>
            <person name="Kawai Y."/>
            <person name="Isono Y."/>
            <person name="Nakamura Y."/>
            <person name="Nagahari K."/>
            <person name="Murakami K."/>
            <person name="Yasuda T."/>
            <person name="Iwayanagi T."/>
            <person name="Wagatsuma M."/>
            <person name="Shiratori A."/>
            <person name="Sudo H."/>
            <person name="Hosoiri T."/>
            <person name="Kaku Y."/>
            <person name="Kodaira H."/>
            <person name="Kondo H."/>
            <person name="Sugawara M."/>
            <person name="Takahashi M."/>
            <person name="Kanda K."/>
            <person name="Yokoi T."/>
            <person name="Furuya T."/>
            <person name="Kikkawa E."/>
            <person name="Omura Y."/>
            <person name="Abe K."/>
            <person name="Kamihara K."/>
            <person name="Katsuta N."/>
            <person name="Sato K."/>
            <person name="Tanikawa M."/>
            <person name="Yamazaki M."/>
            <person name="Ninomiya K."/>
            <person name="Ishibashi T."/>
            <person name="Yamashita H."/>
            <person name="Murakawa K."/>
            <person name="Fujimori K."/>
            <person name="Tanai H."/>
            <person name="Kimata M."/>
            <person name="Watanabe M."/>
            <person name="Hiraoka S."/>
            <person name="Chiba Y."/>
            <person name="Ishida S."/>
            <person name="Ono Y."/>
            <person name="Takiguchi S."/>
            <person name="Watanabe S."/>
            <person name="Yosida M."/>
            <person name="Hotuta T."/>
            <person name="Kusano J."/>
            <person name="Kanehori K."/>
            <person name="Takahashi-Fujii A."/>
            <person name="Hara H."/>
            <person name="Tanase T.-O."/>
            <person name="Nomura Y."/>
            <person name="Togiya S."/>
            <person name="Komai F."/>
            <person name="Hara R."/>
            <person name="Takeuchi K."/>
            <person name="Arita M."/>
            <person name="Imose N."/>
            <person name="Musashino K."/>
            <person name="Yuuki H."/>
            <person name="Oshima A."/>
            <person name="Sasaki N."/>
            <person name="Aotsuka S."/>
            <person name="Yoshikawa Y."/>
            <person name="Matsunawa H."/>
            <person name="Ichihara T."/>
            <person name="Shiohata N."/>
            <person name="Sano S."/>
            <person name="Moriya S."/>
            <person name="Momiyama H."/>
            <person name="Satoh N."/>
            <person name="Takami S."/>
            <person name="Terashima Y."/>
            <person name="Suzuki O."/>
            <person name="Nakagawa S."/>
            <person name="Senoh A."/>
            <person name="Mizoguchi H."/>
            <person name="Goto Y."/>
            <person name="Shimizu F."/>
            <person name="Wakebe H."/>
            <person name="Hishigaki H."/>
            <person name="Watanabe T."/>
            <person name="Sugiyama A."/>
            <person name="Takemoto M."/>
            <person name="Kawakami B."/>
            <person name="Yamazaki M."/>
            <person name="Watanabe K."/>
            <person name="Kumagai A."/>
            <person name="Itakura S."/>
            <person name="Fukuzumi Y."/>
            <person name="Fujimori Y."/>
            <person name="Komiyama M."/>
            <person name="Tashiro H."/>
            <person name="Tanigami A."/>
            <person name="Fujiwara T."/>
            <person name="Ono T."/>
            <person name="Yamada K."/>
            <person name="Fujii Y."/>
            <person name="Ozaki K."/>
            <person name="Hirao M."/>
            <person name="Ohmori Y."/>
            <person name="Kawabata A."/>
            <person name="Hikiji T."/>
            <person name="Kobatake N."/>
            <person name="Inagaki H."/>
            <person name="Ikema Y."/>
            <person name="Okamoto S."/>
            <person name="Okitani R."/>
            <person name="Kawakami T."/>
            <person name="Noguchi S."/>
            <person name="Itoh T."/>
            <person name="Shigeta K."/>
            <person name="Senba T."/>
            <person name="Matsumura K."/>
            <person name="Nakajima Y."/>
            <person name="Mizuno T."/>
            <person name="Morinaga M."/>
            <person name="Sasaki M."/>
            <person name="Togashi T."/>
            <person name="Oyama M."/>
            <person name="Hata H."/>
            <person name="Watanabe M."/>
            <person name="Komatsu T."/>
            <person name="Mizushima-Sugano J."/>
            <person name="Satoh T."/>
            <person name="Shirai Y."/>
            <person name="Takahashi Y."/>
            <person name="Nakagawa K."/>
            <person name="Okumura K."/>
            <person name="Nagase T."/>
            <person name="Nomura N."/>
            <person name="Kikuchi H."/>
            <person name="Masuho Y."/>
            <person name="Yamashita R."/>
            <person name="Nakai K."/>
            <person name="Yada T."/>
            <person name="Nakamura Y."/>
            <person name="Ohara O."/>
            <person name="Isogai T."/>
            <person name="Sugano S."/>
        </authorList>
    </citation>
    <scope>NUCLEOTIDE SEQUENCE [LARGE SCALE MRNA]</scope>
    <source>
        <tissue>Embryo</tissue>
    </source>
</reference>
<reference key="2">
    <citation type="journal article" date="2004" name="Genome Res.">
        <title>The status, quality, and expansion of the NIH full-length cDNA project: the Mammalian Gene Collection (MGC).</title>
        <authorList>
            <consortium name="The MGC Project Team"/>
        </authorList>
    </citation>
    <scope>NUCLEOTIDE SEQUENCE [LARGE SCALE MRNA]</scope>
    <source>
        <tissue>Brain</tissue>
        <tissue>Lymph</tissue>
        <tissue>Muscle</tissue>
    </source>
</reference>
<reference key="3">
    <citation type="journal article" date="2025" name="Autophagy">
        <title>ABHD8 antagonizes inflammation by facilitating chaperone-mediated autophagy-mediated degradation of NLRP3.</title>
        <authorList>
            <person name="Yang S."/>
            <person name="Li M."/>
            <person name="Lian G."/>
            <person name="Wu Y."/>
            <person name="Cui J."/>
            <person name="Wang L."/>
        </authorList>
    </citation>
    <scope>FUNCTION</scope>
    <scope>INTERACTION WITH NLRP3 AND ZDHHC12</scope>
    <scope>SUBCELLULAR LOCATION</scope>
    <scope>INTERACTION WITH SARS-COV-2 N (MICROBIAL INFECTION)</scope>
</reference>